<organism>
    <name type="scientific">Arthrobotrys oligospora (strain ATCC 24927 / CBS 115.81 / DSM 1491)</name>
    <name type="common">Nematode-trapping fungus</name>
    <name type="synonym">Didymozoophaga oligospora</name>
    <dbReference type="NCBI Taxonomy" id="756982"/>
    <lineage>
        <taxon>Eukaryota</taxon>
        <taxon>Fungi</taxon>
        <taxon>Dikarya</taxon>
        <taxon>Ascomycota</taxon>
        <taxon>Pezizomycotina</taxon>
        <taxon>Orbiliomycetes</taxon>
        <taxon>Orbiliales</taxon>
        <taxon>Orbiliaceae</taxon>
        <taxon>Orbilia</taxon>
        <taxon>Orbilia oligospora</taxon>
    </lineage>
</organism>
<dbReference type="EMBL" id="ADOT01000316">
    <property type="protein sequence ID" value="EGX43539.1"/>
    <property type="molecule type" value="Genomic_DNA"/>
</dbReference>
<dbReference type="RefSeq" id="XP_011127779.1">
    <property type="nucleotide sequence ID" value="XM_011129477.1"/>
</dbReference>
<dbReference type="SMR" id="G1XTZ6"/>
<dbReference type="GeneID" id="22898685"/>
<dbReference type="HOGENOM" id="CLU_1011848_0_0_1"/>
<dbReference type="InParanoid" id="G1XTZ6"/>
<dbReference type="OrthoDB" id="1882726at4890"/>
<dbReference type="Proteomes" id="UP000008784">
    <property type="component" value="Unassembled WGS sequence"/>
</dbReference>
<comment type="function">
    <text evidence="2 3">Regulatory protein; part of the gene cluster that mediates the biosynthesis of sesquiterpenyl epoxy-cyclohexenoids (SECs) such as anthrobotrisins and arthrosporols, metabolites that possess a novel hybrid carbon skeleton consisting of a polyketide-derived epoxycyclohexenol combined with a terpenoid-derived monocyclic sesquiterpenol substructure (PKS-PTS hybrid) (PubMed:33823587). The SEC pathway plays an important role for fungal soil colonization via decreasing fungal nematode-capturing ability (PubMed:33823587). AOL_s00215g275 can perform multiple functions in fungal growth and development via regulating the SEC biosynthesis, TCA cycle, and septa formation (PubMed:36547594). Also involved in inhibiting conidial formation, germination, and nematicidal activity but promotes trap production (PubMed:36547594). Plays a role in fungal resistances and significantly regulates the fungal morphology and responses to chemical stressors such as cell-wall-perturbing agents (SDS and Congo red), osmotic agents (NaCl and sorbitol), or the oxidant H(2)O(2) (PubMed:36547594).</text>
</comment>
<comment type="induction">
    <text evidence="4">Expression is down-regulated by the HOG1-MAPK pathway downstream transcription factor MSN2.</text>
</comment>
<comment type="disruption phenotype">
    <text evidence="2 3">Displays significantly decreased fungal growth on nutrient-rich media, while no significant difference in fungal growth was observed on nutrient-deficient medium (PubMed:36547594). Displays also distinct fungal colonies with different morphology with much less dense and thick aerial mycelia (PubMed:36547594). Leads to a 204.4% increase in conidial formation and a 7.6% increased germination rate (PubMed:36547594). Shows slightly decreased trap formationand exhibits significantly decreased nematicidal activity (PubMed:36547594). Leads to dramatic up-regulation of all of the genes in the SEC cluster responsible for the anthrobotrisin biosynthesis and down-regulation of the genes involved in period circadian and actin-related proteins (PubMed:36547594). Shows significantly increased resistances to several chemical stressors, including cell-wall-perturbing agents (SDS and Congo red), osmotic agents (NaCl and sorbitol), and the oxidant H(2)O(2) (PubMed:36547594). Does not lead to any change in metabolic profile of A.oligospora grown on PDB (PubMed:33823587).</text>
</comment>
<sequence>MFTSLRFLCFGNTPLPSLNSSRSPQRTPSLGSSSTSSLSPIEEELATPSTPESNDSGLTLSSSIGPYPIPSSLMREVESIRSHILQQKSRHQNQPSRRHKQKNRRQRLQEVAIKQSIASSIREKAKPIATPTCYYDVSSPYAEDTSVFELNPAGEKNTNEEEEFGIASQHDWDEMINPHYNYLGAQEQIWDGDLDSSAYWGLDDLISQGYFETYDNSSVVCHPKQDANTDESYSISKALTISRNVKQPNGDTGWWLVKHVDPRALSKLGSDCVIL</sequence>
<accession>G1XTZ6</accession>
<evidence type="ECO:0000256" key="1">
    <source>
        <dbReference type="SAM" id="MobiDB-lite"/>
    </source>
</evidence>
<evidence type="ECO:0000269" key="2">
    <source>
    </source>
</evidence>
<evidence type="ECO:0000269" key="3">
    <source>
    </source>
</evidence>
<evidence type="ECO:0000269" key="4">
    <source>
    </source>
</evidence>
<evidence type="ECO:0000303" key="5">
    <source>
    </source>
</evidence>
<proteinExistence type="evidence at transcript level"/>
<gene>
    <name type="ORF">AOL_s00215g275</name>
</gene>
<reference key="1">
    <citation type="journal article" date="2011" name="PLoS Pathog.">
        <title>Genomic and proteomic analyses of the fungus Arthrobotrys oligospora provide insights into nematode-trap formation.</title>
        <authorList>
            <person name="Yang J."/>
            <person name="Wang L."/>
            <person name="Ji X."/>
            <person name="Feng Y."/>
            <person name="Li X."/>
            <person name="Zou C."/>
            <person name="Xu J."/>
            <person name="Ren Y."/>
            <person name="Mi Q."/>
            <person name="Wu J."/>
            <person name="Liu S."/>
            <person name="Liu Y."/>
            <person name="Huang X."/>
            <person name="Wang H."/>
            <person name="Niu X."/>
            <person name="Li J."/>
            <person name="Liang L."/>
            <person name="Luo Y."/>
            <person name="Ji K."/>
            <person name="Zhou W."/>
            <person name="Yu Z."/>
            <person name="Li G."/>
            <person name="Liu Y."/>
            <person name="Li L."/>
            <person name="Qiao M."/>
            <person name="Feng L."/>
            <person name="Zhang K.-Q."/>
        </authorList>
    </citation>
    <scope>NUCLEOTIDE SEQUENCE [LARGE SCALE GENOMIC DNA]</scope>
    <source>
        <strain>ATCC 24927 / CBS 115.81 / DSM 1491</strain>
    </source>
</reference>
<reference key="2">
    <citation type="journal article" date="2021" name="J. Agric. Food Chem.">
        <title>Polyketide synthase-terpenoid synthase hybrid pathway regulation of trap formation through ammonia metabolism controls soil colonization of predominant nematode-trapping fungus.</title>
        <authorList>
            <person name="He Z.Q."/>
            <person name="Wang L.J."/>
            <person name="Wang Y.J."/>
            <person name="Chen Y.H."/>
            <person name="Wen Y."/>
            <person name="Zhang K.Q."/>
            <person name="Niu X.M."/>
        </authorList>
    </citation>
    <scope>FUNCTION</scope>
    <scope>DISRUPTION PHENOTYPE</scope>
    <scope>PATHWAY</scope>
</reference>
<reference key="3">
    <citation type="journal article" date="2022" name="J. Fungi">
        <title>The multifaceted gene 275 embedded in the PKS-PTS gene cluster was involved in the regulation of arthrobotrisin biosynthesis, TCA cycle, and septa formation in nematode-trapping fungus Arthrobotrys oligospora.</title>
        <authorList>
            <person name="Zhou J."/>
            <person name="Wu Q.F."/>
            <person name="Li S.H."/>
            <person name="Yan J.X."/>
            <person name="Wu L."/>
            <person name="Cheng Q.Y."/>
            <person name="He Z.Q."/>
            <person name="Yue X.T."/>
            <person name="Zhang K.Q."/>
            <person name="Zhang L.L."/>
            <person name="Niu X.M."/>
        </authorList>
    </citation>
    <scope>FUNCTION</scope>
    <scope>DISRUPTION PHENOTYPE</scope>
</reference>
<reference key="4">
    <citation type="journal article" date="2025" name="J. Adv. Res.">
        <title>Identification of a transcription factor AoMsn2 of the Hog1 signaling pathway contributes to fungal growth, development and pathogenicity in Arthrobotrys oligospora.</title>
        <authorList>
            <person name="Liu Q."/>
            <person name="Jiang K."/>
            <person name="Duan S."/>
            <person name="Zhao N."/>
            <person name="Shen Y."/>
            <person name="Zhu L."/>
            <person name="Zhang K.Q."/>
            <person name="Yang J."/>
        </authorList>
    </citation>
    <scope>INDUCTION</scope>
</reference>
<keyword id="KW-1185">Reference proteome</keyword>
<protein>
    <recommendedName>
        <fullName evidence="5">Transcription regulator AOL_s00215g275</fullName>
    </recommendedName>
    <alternativeName>
        <fullName evidence="5">Sesquiterpenyl epoxy-cyclohexenoids cluster protein AOL_s00215g275</fullName>
        <shortName evidence="5">SECs cluster protein AOL_s00215g275</shortName>
    </alternativeName>
</protein>
<feature type="chain" id="PRO_0000457839" description="Transcription regulator AOL_s00215g275">
    <location>
        <begin position="1"/>
        <end position="275"/>
    </location>
</feature>
<feature type="region of interest" description="Disordered" evidence="1">
    <location>
        <begin position="13"/>
        <end position="65"/>
    </location>
</feature>
<feature type="region of interest" description="Disordered" evidence="1">
    <location>
        <begin position="84"/>
        <end position="108"/>
    </location>
</feature>
<feature type="compositionally biased region" description="Polar residues" evidence="1">
    <location>
        <begin position="14"/>
        <end position="26"/>
    </location>
</feature>
<feature type="compositionally biased region" description="Low complexity" evidence="1">
    <location>
        <begin position="27"/>
        <end position="40"/>
    </location>
</feature>
<feature type="compositionally biased region" description="Polar residues" evidence="1">
    <location>
        <begin position="47"/>
        <end position="60"/>
    </location>
</feature>
<feature type="compositionally biased region" description="Basic residues" evidence="1">
    <location>
        <begin position="88"/>
        <end position="106"/>
    </location>
</feature>
<name>AR275_ARTOA</name>